<feature type="chain" id="PRO_0000278423" description="DNA replication complex GINS protein PSF3">
    <location>
        <begin position="1"/>
        <end position="179"/>
    </location>
</feature>
<dbReference type="EMBL" id="DS231664">
    <property type="protein sequence ID" value="ESU08648.1"/>
    <property type="molecule type" value="Genomic_DNA"/>
</dbReference>
<dbReference type="EMBL" id="HG970333">
    <property type="protein sequence ID" value="CEF79466.1"/>
    <property type="molecule type" value="Genomic_DNA"/>
</dbReference>
<dbReference type="RefSeq" id="XP_011321147.1">
    <property type="nucleotide sequence ID" value="XM_011322845.1"/>
</dbReference>
<dbReference type="SMR" id="Q4IEA5"/>
<dbReference type="FunCoup" id="Q4IEA5">
    <property type="interactions" value="408"/>
</dbReference>
<dbReference type="STRING" id="229533.Q4IEA5"/>
<dbReference type="GeneID" id="23551704"/>
<dbReference type="KEGG" id="fgr:FGSG_04453"/>
<dbReference type="VEuPathDB" id="FungiDB:FGRAMPH1_01G15329"/>
<dbReference type="eggNOG" id="KOG1106">
    <property type="taxonomic scope" value="Eukaryota"/>
</dbReference>
<dbReference type="HOGENOM" id="CLU_081646_0_1_1"/>
<dbReference type="InParanoid" id="Q4IEA5"/>
<dbReference type="OrthoDB" id="21245at110618"/>
<dbReference type="Proteomes" id="UP000070720">
    <property type="component" value="Chromosome 2"/>
</dbReference>
<dbReference type="GO" id="GO:0000811">
    <property type="term" value="C:GINS complex"/>
    <property type="evidence" value="ECO:0007669"/>
    <property type="project" value="TreeGrafter"/>
</dbReference>
<dbReference type="GO" id="GO:1902975">
    <property type="term" value="P:mitotic DNA replication initiation"/>
    <property type="evidence" value="ECO:0007669"/>
    <property type="project" value="TreeGrafter"/>
</dbReference>
<dbReference type="CDD" id="cd11713">
    <property type="entry name" value="GINS_A_psf3"/>
    <property type="match status" value="1"/>
</dbReference>
<dbReference type="CDD" id="cd21693">
    <property type="entry name" value="GINS_B_Psf3"/>
    <property type="match status" value="1"/>
</dbReference>
<dbReference type="Gene3D" id="1.20.58.2050">
    <property type="match status" value="1"/>
</dbReference>
<dbReference type="InterPro" id="IPR021151">
    <property type="entry name" value="GINS_A"/>
</dbReference>
<dbReference type="InterPro" id="IPR036224">
    <property type="entry name" value="GINS_bundle-like_dom_sf"/>
</dbReference>
<dbReference type="InterPro" id="IPR010492">
    <property type="entry name" value="GINS_Psf3"/>
</dbReference>
<dbReference type="InterPro" id="IPR038437">
    <property type="entry name" value="GINS_Psf3_sf"/>
</dbReference>
<dbReference type="InterPro" id="IPR055221">
    <property type="entry name" value="PSF3_N"/>
</dbReference>
<dbReference type="PANTHER" id="PTHR22768">
    <property type="entry name" value="DNA REPLICATION COMPLEX GINS PROTEIN PSF3"/>
    <property type="match status" value="1"/>
</dbReference>
<dbReference type="PANTHER" id="PTHR22768:SF0">
    <property type="entry name" value="DNA REPLICATION COMPLEX GINS PROTEIN PSF3"/>
    <property type="match status" value="1"/>
</dbReference>
<dbReference type="Pfam" id="PF22466">
    <property type="entry name" value="PSF3_N"/>
    <property type="match status" value="1"/>
</dbReference>
<dbReference type="Pfam" id="PF05916">
    <property type="entry name" value="Sld5"/>
    <property type="match status" value="1"/>
</dbReference>
<dbReference type="SUPFAM" id="SSF158573">
    <property type="entry name" value="GINS helical bundle-like"/>
    <property type="match status" value="1"/>
</dbReference>
<dbReference type="SUPFAM" id="SSF160059">
    <property type="entry name" value="PriA/YqbF domain"/>
    <property type="match status" value="1"/>
</dbReference>
<accession>Q4IEA5</accession>
<accession>A0A0E0S7J1</accession>
<accession>V6R236</accession>
<protein>
    <recommendedName>
        <fullName>DNA replication complex GINS protein PSF3</fullName>
    </recommendedName>
</protein>
<comment type="function">
    <text evidence="1">The GINS complex plays an essential role in the initiation of DNA replication.</text>
</comment>
<comment type="subunit">
    <text evidence="1">Component of the GINS complex which is a heterotetramer of SLD5, PSF1, PSF2 and PSF3.</text>
</comment>
<comment type="subcellular location">
    <subcellularLocation>
        <location evidence="1">Nucleus</location>
    </subcellularLocation>
</comment>
<comment type="similarity">
    <text evidence="2">Belongs to the GINS3/PSF3 family.</text>
</comment>
<proteinExistence type="inferred from homology"/>
<gene>
    <name type="primary">PSF3</name>
    <name type="ORF">FGRRES_04453</name>
    <name type="ORF">FGSG_04453</name>
</gene>
<reference key="1">
    <citation type="journal article" date="2007" name="Science">
        <title>The Fusarium graminearum genome reveals a link between localized polymorphism and pathogen specialization.</title>
        <authorList>
            <person name="Cuomo C.A."/>
            <person name="Gueldener U."/>
            <person name="Xu J.-R."/>
            <person name="Trail F."/>
            <person name="Turgeon B.G."/>
            <person name="Di Pietro A."/>
            <person name="Walton J.D."/>
            <person name="Ma L.-J."/>
            <person name="Baker S.E."/>
            <person name="Rep M."/>
            <person name="Adam G."/>
            <person name="Antoniw J."/>
            <person name="Baldwin T."/>
            <person name="Calvo S.E."/>
            <person name="Chang Y.-L."/>
            <person name="DeCaprio D."/>
            <person name="Gale L.R."/>
            <person name="Gnerre S."/>
            <person name="Goswami R.S."/>
            <person name="Hammond-Kosack K."/>
            <person name="Harris L.J."/>
            <person name="Hilburn K."/>
            <person name="Kennell J.C."/>
            <person name="Kroken S."/>
            <person name="Magnuson J.K."/>
            <person name="Mannhaupt G."/>
            <person name="Mauceli E.W."/>
            <person name="Mewes H.-W."/>
            <person name="Mitterbauer R."/>
            <person name="Muehlbauer G."/>
            <person name="Muensterkoetter M."/>
            <person name="Nelson D."/>
            <person name="O'Donnell K."/>
            <person name="Ouellet T."/>
            <person name="Qi W."/>
            <person name="Quesneville H."/>
            <person name="Roncero M.I.G."/>
            <person name="Seong K.-Y."/>
            <person name="Tetko I.V."/>
            <person name="Urban M."/>
            <person name="Waalwijk C."/>
            <person name="Ward T.J."/>
            <person name="Yao J."/>
            <person name="Birren B.W."/>
            <person name="Kistler H.C."/>
        </authorList>
    </citation>
    <scope>NUCLEOTIDE SEQUENCE [LARGE SCALE GENOMIC DNA]</scope>
    <source>
        <strain>ATCC MYA-4620 / CBS 123657 / FGSC 9075 / NRRL 31084 / PH-1</strain>
    </source>
</reference>
<reference key="2">
    <citation type="journal article" date="2010" name="Nature">
        <title>Comparative genomics reveals mobile pathogenicity chromosomes in Fusarium.</title>
        <authorList>
            <person name="Ma L.-J."/>
            <person name="van der Does H.C."/>
            <person name="Borkovich K.A."/>
            <person name="Coleman J.J."/>
            <person name="Daboussi M.-J."/>
            <person name="Di Pietro A."/>
            <person name="Dufresne M."/>
            <person name="Freitag M."/>
            <person name="Grabherr M."/>
            <person name="Henrissat B."/>
            <person name="Houterman P.M."/>
            <person name="Kang S."/>
            <person name="Shim W.-B."/>
            <person name="Woloshuk C."/>
            <person name="Xie X."/>
            <person name="Xu J.-R."/>
            <person name="Antoniw J."/>
            <person name="Baker S.E."/>
            <person name="Bluhm B.H."/>
            <person name="Breakspear A."/>
            <person name="Brown D.W."/>
            <person name="Butchko R.A.E."/>
            <person name="Chapman S."/>
            <person name="Coulson R."/>
            <person name="Coutinho P.M."/>
            <person name="Danchin E.G.J."/>
            <person name="Diener A."/>
            <person name="Gale L.R."/>
            <person name="Gardiner D.M."/>
            <person name="Goff S."/>
            <person name="Hammond-Kosack K.E."/>
            <person name="Hilburn K."/>
            <person name="Hua-Van A."/>
            <person name="Jonkers W."/>
            <person name="Kazan K."/>
            <person name="Kodira C.D."/>
            <person name="Koehrsen M."/>
            <person name="Kumar L."/>
            <person name="Lee Y.-H."/>
            <person name="Li L."/>
            <person name="Manners J.M."/>
            <person name="Miranda-Saavedra D."/>
            <person name="Mukherjee M."/>
            <person name="Park G."/>
            <person name="Park J."/>
            <person name="Park S.-Y."/>
            <person name="Proctor R.H."/>
            <person name="Regev A."/>
            <person name="Ruiz-Roldan M.C."/>
            <person name="Sain D."/>
            <person name="Sakthikumar S."/>
            <person name="Sykes S."/>
            <person name="Schwartz D.C."/>
            <person name="Turgeon B.G."/>
            <person name="Wapinski I."/>
            <person name="Yoder O."/>
            <person name="Young S."/>
            <person name="Zeng Q."/>
            <person name="Zhou S."/>
            <person name="Galagan J."/>
            <person name="Cuomo C.A."/>
            <person name="Kistler H.C."/>
            <person name="Rep M."/>
        </authorList>
    </citation>
    <scope>GENOME REANNOTATION</scope>
    <source>
        <strain>ATCC MYA-4620 / CBS 123657 / FGSC 9075 / NRRL 31084 / PH-1</strain>
    </source>
</reference>
<reference key="3">
    <citation type="journal article" date="2015" name="BMC Genomics">
        <title>The completed genome sequence of the pathogenic ascomycete fungus Fusarium graminearum.</title>
        <authorList>
            <person name="King R."/>
            <person name="Urban M."/>
            <person name="Hammond-Kosack M.C.U."/>
            <person name="Hassani-Pak K."/>
            <person name="Hammond-Kosack K.E."/>
        </authorList>
    </citation>
    <scope>NUCLEOTIDE SEQUENCE [LARGE SCALE GENOMIC DNA]</scope>
    <source>
        <strain>ATCC MYA-4620 / CBS 123657 / FGSC 9075 / NRRL 31084 / PH-1</strain>
    </source>
</reference>
<name>PSF3_GIBZE</name>
<evidence type="ECO:0000250" key="1"/>
<evidence type="ECO:0000305" key="2"/>
<keyword id="KW-0235">DNA replication</keyword>
<keyword id="KW-0539">Nucleus</keyword>
<keyword id="KW-1185">Reference proteome</keyword>
<sequence length="179" mass="19743">MSYYDIDAILTDAEKVPCQFEIDVPYLGHLDNSPNGLKANTPLTLPLWLAEMLALASTPTSNSPLTLNLPPCLSTAVLSALKADPRAVPLRDHSLHFYGVGVRMLDLFDEKDVAEVLRKTFVVRAGDVGLHARKADEGMVGGNGEEFLRGLEEWERGLFRRGHEGVKGAKEWTDKVKKT</sequence>
<organism>
    <name type="scientific">Gibberella zeae (strain ATCC MYA-4620 / CBS 123657 / FGSC 9075 / NRRL 31084 / PH-1)</name>
    <name type="common">Wheat head blight fungus</name>
    <name type="synonym">Fusarium graminearum</name>
    <dbReference type="NCBI Taxonomy" id="229533"/>
    <lineage>
        <taxon>Eukaryota</taxon>
        <taxon>Fungi</taxon>
        <taxon>Dikarya</taxon>
        <taxon>Ascomycota</taxon>
        <taxon>Pezizomycotina</taxon>
        <taxon>Sordariomycetes</taxon>
        <taxon>Hypocreomycetidae</taxon>
        <taxon>Hypocreales</taxon>
        <taxon>Nectriaceae</taxon>
        <taxon>Fusarium</taxon>
    </lineage>
</organism>